<keyword id="KW-0167">Capsid protein</keyword>
<keyword id="KW-1176">Cytoplasmic inwards viral transport</keyword>
<keyword id="KW-0238">DNA-binding</keyword>
<keyword id="KW-1035">Host cytoplasm</keyword>
<keyword id="KW-1048">Host nucleus</keyword>
<keyword id="KW-0945">Host-virus interaction</keyword>
<keyword id="KW-1177">Microtubular inwards viral transport</keyword>
<keyword id="KW-1185">Reference proteome</keyword>
<keyword id="KW-0694">RNA-binding</keyword>
<keyword id="KW-1198">Viral budding</keyword>
<keyword id="KW-1187">Viral budding via the host ESCRT complexes</keyword>
<keyword id="KW-0543">Viral nucleoprotein</keyword>
<keyword id="KW-1188">Viral release from host cell</keyword>
<keyword id="KW-0946">Virion</keyword>
<keyword id="KW-1160">Virus entry into host cell</keyword>
<reference key="1">
    <citation type="journal article" date="1992" name="Virology">
        <title>Genomic organization and expression of simian foamy virus type 3 (SFV-3).</title>
        <authorList>
            <person name="Renne R."/>
            <person name="Friedl E."/>
            <person name="Schweizer M."/>
            <person name="Fleps U."/>
            <person name="Turek R."/>
            <person name="Neumann-Haefelin D."/>
        </authorList>
    </citation>
    <scope>NUCLEOTIDE SEQUENCE [GENOMIC DNA]</scope>
</reference>
<reference key="2">
    <citation type="journal article" date="2003" name="Curr. Top. Microbiol. Immunol.">
        <title>Proteolytic processing of foamy virus Gag and Pol proteins.</title>
        <authorList>
            <person name="Fluegel R.M."/>
            <person name="Pfrepper K.-I."/>
        </authorList>
    </citation>
    <scope>REVIEW</scope>
</reference>
<reference key="3">
    <citation type="journal article" date="2004" name="Curr. Opin. Microbiol.">
        <title>Foamy viruses-a world apart.</title>
        <authorList>
            <person name="Delelis O."/>
            <person name="Lehmann-Che J."/>
            <person name="Saib A."/>
        </authorList>
    </citation>
    <scope>REVIEW</scope>
</reference>
<sequence length="643" mass="69786">MGDHNLNVQELLNLFQNLGIPRQPNHREVIGLRMLGGWWGPGTRYILVSIFLQDDSGQPLQQPRWRPEGRPVNPLVHNTIEAPWGELRQAFEDLDVAEGTLRFGPLANGNWIPGDEYSMEFQPPLAQEIAQMQRDELEEILDITGQICAQVIDLVDMQDAQIRGLERRIQDRLGLRDNLPVAGIQAPPSSPIGQPIASSSLQPIPGSSSSPADLDGIWTPRQIDPRLSRVAYNPFLPGSSDGSGGSIPVQPSAPPAVLPSLPSLPAPVSQPIIQYVAQPPVPAPQAIPIQHIRAVTGNTPTNPRDIPMWLGRHSAAIEGVFPMTTPDLRCRVVNALIGGSLGLSLEPIHCVNWAAVVAALYVRTHGSYPIHELANVLRAVVTQEGVATGFQLGIMLSNQDYNLVWGILRPLLPGQAVVTAMQQRLDQEVNDAARITSFNGHLNDIYQLLGLNARGQSIARAQSASTSGNSASAGRGRRGQRTQQQAGRQQQQQTRRTNQGNQGQRDNNQRQSSGGNQGQRGQGGYDLRPRTYQPQRYGGGRGRRWNDNQQQQQAQPGRSSDQPRSQSQQPQPEARGDQSRTSGAGRGQQGRGNQNRNQRRADANNTRNVDTVTATTTSSSTASSGQNGSSTTPPASGSRNQGD</sequence>
<feature type="chain" id="PRO_0000125477" description="Gag polyprotein">
    <location>
        <begin position="1"/>
        <end position="643"/>
    </location>
</feature>
<feature type="chain" id="PRO_0000245441" description="Gag protein">
    <location>
        <begin position="1"/>
        <end position="610"/>
    </location>
</feature>
<feature type="chain" id="PRO_0000245442" description="p3">
    <location>
        <begin position="611"/>
        <end position="643"/>
    </location>
</feature>
<feature type="region of interest" description="Involved in viral assembly and export" evidence="2">
    <location>
        <begin position="31"/>
        <end position="54"/>
    </location>
</feature>
<feature type="region of interest" description="Disordered" evidence="3">
    <location>
        <begin position="180"/>
        <end position="219"/>
    </location>
</feature>
<feature type="region of interest" description="Disordered" evidence="3">
    <location>
        <begin position="232"/>
        <end position="254"/>
    </location>
</feature>
<feature type="region of interest" description="Disordered" evidence="3">
    <location>
        <begin position="460"/>
        <end position="643"/>
    </location>
</feature>
<feature type="region of interest" description="Nucleic acid-binding; GR-box 1" evidence="1">
    <location>
        <begin position="468"/>
        <end position="493"/>
    </location>
</feature>
<feature type="region of interest" description="GR-box 2">
    <location>
        <begin position="523"/>
        <end position="544"/>
    </location>
</feature>
<feature type="region of interest" description="GR-box 3">
    <location>
        <begin position="575"/>
        <end position="607"/>
    </location>
</feature>
<feature type="short sequence motif" description="PTAP/PSAP motif">
    <location>
        <begin position="251"/>
        <end position="254"/>
    </location>
</feature>
<feature type="short sequence motif" description="Nuclear localization signal" evidence="1">
    <location>
        <begin position="523"/>
        <end position="544"/>
    </location>
</feature>
<feature type="compositionally biased region" description="Low complexity" evidence="3">
    <location>
        <begin position="198"/>
        <end position="211"/>
    </location>
</feature>
<feature type="compositionally biased region" description="Low complexity" evidence="3">
    <location>
        <begin position="461"/>
        <end position="474"/>
    </location>
</feature>
<feature type="compositionally biased region" description="Low complexity" evidence="3">
    <location>
        <begin position="481"/>
        <end position="514"/>
    </location>
</feature>
<feature type="compositionally biased region" description="Gly residues" evidence="3">
    <location>
        <begin position="515"/>
        <end position="524"/>
    </location>
</feature>
<feature type="compositionally biased region" description="Low complexity" evidence="3">
    <location>
        <begin position="547"/>
        <end position="572"/>
    </location>
</feature>
<feature type="compositionally biased region" description="Low complexity" evidence="3">
    <location>
        <begin position="603"/>
        <end position="632"/>
    </location>
</feature>
<feature type="compositionally biased region" description="Polar residues" evidence="3">
    <location>
        <begin position="633"/>
        <end position="643"/>
    </location>
</feature>
<feature type="site" description="Cleavage; by viral protease; low efficiency" evidence="2">
    <location>
        <begin position="293"/>
        <end position="294"/>
    </location>
</feature>
<feature type="site" description="Cleavage; by viral protease; low efficiency" evidence="2">
    <location>
        <begin position="321"/>
        <end position="322"/>
    </location>
</feature>
<feature type="site" description="Cleavage; by viral protease; low efficiency" evidence="2">
    <location>
        <begin position="334"/>
        <end position="335"/>
    </location>
</feature>
<feature type="site" description="Cleavage; by viral protease; partial">
    <location>
        <begin position="610"/>
        <end position="611"/>
    </location>
</feature>
<comment type="function">
    <text evidence="1">Involved in capsid formation and genome binding. Shortly after infection, interaction between incoming particle-associated Gag proteins and host dynein allows centrosomal targeting of the viral genome (associated to Gag), prior to nucleus translocation and integration into host genome (By similarity).</text>
</comment>
<comment type="subunit">
    <molecule>Gag protein</molecule>
    <text evidence="1">Specifically interacts with the N-terminus of leader peptide. This specific interaction between Gag protein and Env glycoprotein may compensate for the lack of a Gag membrane targeting signal, and allow particle egress. The capsid is composed of multimeric Gag protein. Interacts with host TSG101. Interacts with host light chain cytoplasmic dynein DYNLL1; this interaction is critical for intracellular microtubule-dependent viral genome transport toward the centrosome (By similarity).</text>
</comment>
<comment type="subcellular location">
    <molecule>Gag protein</molecule>
    <subcellularLocation>
        <location evidence="1">Virion</location>
    </subcellularLocation>
    <subcellularLocation>
        <location evidence="1">Host nucleus</location>
    </subcellularLocation>
    <subcellularLocation>
        <location evidence="1">Host cytoplasm</location>
    </subcellularLocation>
    <text evidence="1">Gag protein is nuclear at initial phase, cytoplasmic at assembly. Shortly after infection, Gag protein is targeted to centrosomes. It is then actively transported into the nucleus thanks to its nuclear localization signal. In the late phases of infection, Gag proteins assemble in the cytoplasm to form the virion's capsids (By similarity).</text>
</comment>
<comment type="subcellular location">
    <molecule>p3</molecule>
    <subcellularLocation>
        <location evidence="1">Virion</location>
    </subcellularLocation>
</comment>
<comment type="domain">
    <text evidence="1">Gag protein contains 3 glycine-arginine motifs (GR-boxes) necessary for RNA packaging, the first of which has nucleic acid binding properties in vitro.</text>
</comment>
<comment type="domain">
    <text evidence="1">Late-budding domains (L domains) are short sequence motifs essential for viral particle budding. They recruit proteins of the host ESCRT machinery (Endosomal Sorting Complex Required for Transport) or ESCRT-associated proteins. Gag protein contains a PTAP/PSAP motif, which interacts with the UEV domain of TSG101 (By similarity).</text>
</comment>
<comment type="PTM">
    <text evidence="1">Specific enzymatic cleavages in vivo by viral protease yield mature proteins. The protease is not cleaved off from Pol. Since cleavage efficiency is not optimal for all sites, intermediary molecules are expressed (By similarity).</text>
</comment>
<comment type="miscellaneous">
    <text>Foamy viruses are distinct from other retroviruses in many respects. Their protease is active as an uncleaved Pro-Pol protein. Mature particles do not include the usual processed retroviral structural protein (MA, CA and NC), but instead contain two large Gag proteins. Their functional nucleic acid appears to be either RNA or dsDNA (up to 20% of extracellular particles), because they probably proceed either to an early (before integration) or late reverse transcription (after assembly). Foamy viruses have the ability to retrotranspose intracellularly with high efficiency. They bud predominantly into the endoplasmic reticulum (ER) and occasionally at the plasma membrane. Budding requires the presence of Env proteins. Most viral particles probably remain within the infected cell.</text>
</comment>
<comment type="sequence caution" evidence="4">
    <conflict type="erroneous initiation">
        <sequence resource="EMBL-CDS" id="AAA47795"/>
    </conflict>
</comment>
<accession>P27400</accession>
<protein>
    <recommendedName>
        <fullName>Gag polyprotein</fullName>
    </recommendedName>
    <alternativeName>
        <fullName>Pr71Gag</fullName>
    </alternativeName>
    <component>
        <recommendedName>
            <fullName>Gag protein</fullName>
        </recommendedName>
        <alternativeName>
            <fullName>p68</fullName>
        </alternativeName>
    </component>
    <component>
        <recommendedName>
            <fullName>p3</fullName>
        </recommendedName>
    </component>
</protein>
<organism>
    <name type="scientific">Simian foamy virus type 3 (strain LK3)</name>
    <name type="common">SFVagm</name>
    <name type="synonym">SFV-3</name>
    <dbReference type="NCBI Taxonomy" id="11644"/>
    <lineage>
        <taxon>Viruses</taxon>
        <taxon>Riboviria</taxon>
        <taxon>Pararnavirae</taxon>
        <taxon>Artverviricota</taxon>
        <taxon>Revtraviricetes</taxon>
        <taxon>Ortervirales</taxon>
        <taxon>Retroviridae</taxon>
        <taxon>Spumaretrovirinae</taxon>
        <taxon>Spumavirus</taxon>
        <taxon>African green monkey simian foamy virus</taxon>
    </lineage>
</organism>
<name>GAG_SFV3L</name>
<gene>
    <name type="primary">gag</name>
</gene>
<proteinExistence type="inferred from homology"/>
<evidence type="ECO:0000250" key="1"/>
<evidence type="ECO:0000255" key="2"/>
<evidence type="ECO:0000256" key="3">
    <source>
        <dbReference type="SAM" id="MobiDB-lite"/>
    </source>
</evidence>
<evidence type="ECO:0000305" key="4"/>
<dbReference type="EMBL" id="M74895">
    <property type="protein sequence ID" value="AAA47795.1"/>
    <property type="status" value="ALT_INIT"/>
    <property type="molecule type" value="Genomic_DNA"/>
</dbReference>
<dbReference type="RefSeq" id="YP_001956721.2">
    <property type="nucleotide sequence ID" value="NC_010820.1"/>
</dbReference>
<dbReference type="SMR" id="P27400"/>
<dbReference type="GeneID" id="6386656"/>
<dbReference type="KEGG" id="vg:6386656"/>
<dbReference type="Proteomes" id="UP000007217">
    <property type="component" value="Segment"/>
</dbReference>
<dbReference type="GO" id="GO:0043657">
    <property type="term" value="C:host cell"/>
    <property type="evidence" value="ECO:0007669"/>
    <property type="project" value="GOC"/>
</dbReference>
<dbReference type="GO" id="GO:0030430">
    <property type="term" value="C:host cell cytoplasm"/>
    <property type="evidence" value="ECO:0007669"/>
    <property type="project" value="UniProtKB-SubCell"/>
</dbReference>
<dbReference type="GO" id="GO:0042025">
    <property type="term" value="C:host cell nucleus"/>
    <property type="evidence" value="ECO:0007669"/>
    <property type="project" value="UniProtKB-SubCell"/>
</dbReference>
<dbReference type="GO" id="GO:0044163">
    <property type="term" value="C:host cytoskeleton"/>
    <property type="evidence" value="ECO:0007669"/>
    <property type="project" value="InterPro"/>
</dbReference>
<dbReference type="GO" id="GO:0019013">
    <property type="term" value="C:viral nucleocapsid"/>
    <property type="evidence" value="ECO:0007669"/>
    <property type="project" value="UniProtKB-KW"/>
</dbReference>
<dbReference type="GO" id="GO:0003677">
    <property type="term" value="F:DNA binding"/>
    <property type="evidence" value="ECO:0007669"/>
    <property type="project" value="UniProtKB-KW"/>
</dbReference>
<dbReference type="GO" id="GO:0003723">
    <property type="term" value="F:RNA binding"/>
    <property type="evidence" value="ECO:0007669"/>
    <property type="project" value="UniProtKB-KW"/>
</dbReference>
<dbReference type="GO" id="GO:0075521">
    <property type="term" value="P:microtubule-dependent intracellular transport of viral material towards nucleus"/>
    <property type="evidence" value="ECO:0007669"/>
    <property type="project" value="UniProtKB-KW"/>
</dbReference>
<dbReference type="GO" id="GO:0046718">
    <property type="term" value="P:symbiont entry into host cell"/>
    <property type="evidence" value="ECO:0007669"/>
    <property type="project" value="UniProtKB-KW"/>
</dbReference>
<dbReference type="GO" id="GO:0039702">
    <property type="term" value="P:viral budding via host ESCRT complex"/>
    <property type="evidence" value="ECO:0007669"/>
    <property type="project" value="UniProtKB-KW"/>
</dbReference>
<dbReference type="GO" id="GO:0019076">
    <property type="term" value="P:viral release from host cell"/>
    <property type="evidence" value="ECO:0007669"/>
    <property type="project" value="InterPro"/>
</dbReference>
<dbReference type="InterPro" id="IPR049099">
    <property type="entry name" value="Gag_C"/>
</dbReference>
<dbReference type="InterPro" id="IPR004957">
    <property type="entry name" value="Gag_N"/>
</dbReference>
<dbReference type="Pfam" id="PF20672">
    <property type="entry name" value="Gag_FV_central"/>
    <property type="match status" value="1"/>
</dbReference>
<dbReference type="Pfam" id="PF20673">
    <property type="entry name" value="Gag_spuma_C"/>
    <property type="match status" value="1"/>
</dbReference>
<dbReference type="Pfam" id="PF03276">
    <property type="entry name" value="Gag_spuma_N"/>
    <property type="match status" value="1"/>
</dbReference>
<organismHost>
    <name type="scientific">Chlorocebus aethiops</name>
    <name type="common">Green monkey</name>
    <name type="synonym">Cercopithecus aethiops</name>
    <dbReference type="NCBI Taxonomy" id="9534"/>
</organismHost>
<organismHost>
    <name type="scientific">Homo sapiens</name>
    <name type="common">Human</name>
    <dbReference type="NCBI Taxonomy" id="9606"/>
</organismHost>